<reference key="1">
    <citation type="journal article" date="2001" name="Nature">
        <title>Genome sequence and gene compaction of the eukaryote parasite Encephalitozoon cuniculi.</title>
        <authorList>
            <person name="Katinka M.D."/>
            <person name="Duprat S."/>
            <person name="Cornillot E."/>
            <person name="Metenier G."/>
            <person name="Thomarat F."/>
            <person name="Prensier G."/>
            <person name="Barbe V."/>
            <person name="Peyretaillade E."/>
            <person name="Brottier P."/>
            <person name="Wincker P."/>
            <person name="Delbac F."/>
            <person name="El Alaoui H."/>
            <person name="Peyret P."/>
            <person name="Saurin W."/>
            <person name="Gouy M."/>
            <person name="Weissenbach J."/>
            <person name="Vivares C.P."/>
        </authorList>
    </citation>
    <scope>NUCLEOTIDE SEQUENCE [LARGE SCALE GENOMIC DNA]</scope>
    <source>
        <strain>GB-M1</strain>
    </source>
</reference>
<reference key="2">
    <citation type="journal article" date="2001" name="Genome Res.">
        <title>Sequence and analysis of chromosome I of the amitochondriate intracellular parasite Encephalitozoon cuniculi (Microspora).</title>
        <authorList>
            <person name="Peyret P."/>
            <person name="Katinka M.D."/>
            <person name="Duprat S."/>
            <person name="Duffieux F."/>
            <person name="Barbe V."/>
            <person name="Barbazanges M."/>
            <person name="Weissenbach J."/>
            <person name="Saurin W."/>
            <person name="Vivares C.P."/>
        </authorList>
    </citation>
    <scope>NUCLEOTIDE SEQUENCE [LARGE SCALE GENOMIC DNA]</scope>
    <source>
        <strain>GB-M1</strain>
    </source>
</reference>
<reference key="3">
    <citation type="journal article" date="2006" name="Proteomics">
        <title>Proteomic analysis of the eukaryotic parasite Encephalitozoon cuniculi (microsporidia): a reference map for proteins expressed in late sporogonial stages.</title>
        <authorList>
            <person name="Brosson D."/>
            <person name="Kuhn L."/>
            <person name="Delbac F."/>
            <person name="Garin J."/>
            <person name="Vivares C.P."/>
            <person name="Texier C."/>
        </authorList>
    </citation>
    <scope>IDENTIFICATION BY MASS SPECTROMETRY [LARGE SCALE ANALYSIS]</scope>
    <scope>DEVELOPMENTAL STAGE</scope>
    <scope>SUBCELLULAR LOCATION</scope>
</reference>
<sequence>MHFNIFVEGEFNNVKGVFIDQSYPLRIQCTNCGSPHEKSVVLSEDSVGEGDFGEKVNLSITCRCCRRIMTLKILKLKEGREVKKHLLPTNFEDEFKEVWLSDMQKSRFLVSRIETNGAEVTSIESCILNLVSNQDVLFTNVNFEDRTVAKCNNLNMISSIIDFSLTVELAK</sequence>
<protein>
    <recommendedName>
        <fullName>Uncharacterized protein ECU01_0250</fullName>
    </recommendedName>
</protein>
<gene>
    <name type="ordered locus">ECU01_0250</name>
</gene>
<accession>Q8SWQ4</accession>
<name>Y125_ENCCU</name>
<keyword id="KW-0002">3D-structure</keyword>
<keyword id="KW-1185">Reference proteome</keyword>
<organism>
    <name type="scientific">Encephalitozoon cuniculi (strain GB-M1)</name>
    <name type="common">Microsporidian parasite</name>
    <dbReference type="NCBI Taxonomy" id="284813"/>
    <lineage>
        <taxon>Eukaryota</taxon>
        <taxon>Fungi</taxon>
        <taxon>Fungi incertae sedis</taxon>
        <taxon>Microsporidia</taxon>
        <taxon>Unikaryonidae</taxon>
        <taxon>Encephalitozoon</taxon>
    </lineage>
</organism>
<feature type="chain" id="PRO_0000382917" description="Uncharacterized protein ECU01_0250">
    <location>
        <begin position="1"/>
        <end position="171"/>
    </location>
</feature>
<comment type="developmental stage">
    <text evidence="1">Expressed in late sporogonial stages.</text>
</comment>
<evidence type="ECO:0000269" key="1">
    <source>
    </source>
</evidence>
<proteinExistence type="evidence at protein level"/>
<dbReference type="EMBL" id="AL391737">
    <property type="protein sequence ID" value="CAD24895.1"/>
    <property type="molecule type" value="Genomic_DNA"/>
</dbReference>
<dbReference type="RefSeq" id="NP_001402111.1">
    <property type="nucleotide sequence ID" value="NM_001415526.1"/>
</dbReference>
<dbReference type="RefSeq" id="XP_965860.1">
    <property type="nucleotide sequence ID" value="XM_960767.1"/>
</dbReference>
<dbReference type="PDB" id="7QEP">
    <property type="method" value="EM"/>
    <property type="resolution" value="2.70 A"/>
    <property type="chains" value="MD=1-171"/>
</dbReference>
<dbReference type="PDBsum" id="7QEP"/>
<dbReference type="EMDB" id="EMD-13936"/>
<dbReference type="SMR" id="Q8SWQ4"/>
<dbReference type="STRING" id="284813.Q8SWQ4"/>
<dbReference type="GeneID" id="860199"/>
<dbReference type="VEuPathDB" id="MicrosporidiaDB:ECU01_0250"/>
<dbReference type="HOGENOM" id="CLU_132184_0_0_1"/>
<dbReference type="InParanoid" id="Q8SWQ4"/>
<dbReference type="OMA" id="DGSWMGV"/>
<dbReference type="OrthoDB" id="2189688at2759"/>
<dbReference type="Proteomes" id="UP000000819">
    <property type="component" value="Chromosome I"/>
</dbReference>
<dbReference type="InterPro" id="IPR008584">
    <property type="entry name" value="CXXC_Zn-binding_euk"/>
</dbReference>
<dbReference type="Pfam" id="PF05907">
    <property type="entry name" value="CXXC_Zn-b_euk"/>
    <property type="match status" value="1"/>
</dbReference>
<dbReference type="SUPFAM" id="SSF141678">
    <property type="entry name" value="MAL13P1.257-like"/>
    <property type="match status" value="1"/>
</dbReference>